<comment type="function">
    <text evidence="1">DNA ligase that seals nicks in double-stranded DNA during DNA replication, DNA recombination and DNA repair.</text>
</comment>
<comment type="catalytic activity">
    <reaction evidence="1">
        <text>ATP + (deoxyribonucleotide)n-3'-hydroxyl + 5'-phospho-(deoxyribonucleotide)m = (deoxyribonucleotide)n+m + AMP + diphosphate.</text>
        <dbReference type="EC" id="6.5.1.1"/>
    </reaction>
</comment>
<comment type="cofactor">
    <cofactor evidence="1">
        <name>Mg(2+)</name>
        <dbReference type="ChEBI" id="CHEBI:18420"/>
    </cofactor>
</comment>
<comment type="similarity">
    <text evidence="1">Belongs to the ATP-dependent DNA ligase family.</text>
</comment>
<keyword id="KW-0067">ATP-binding</keyword>
<keyword id="KW-0131">Cell cycle</keyword>
<keyword id="KW-0132">Cell division</keyword>
<keyword id="KW-0227">DNA damage</keyword>
<keyword id="KW-0233">DNA recombination</keyword>
<keyword id="KW-0234">DNA repair</keyword>
<keyword id="KW-0235">DNA replication</keyword>
<keyword id="KW-0436">Ligase</keyword>
<keyword id="KW-0460">Magnesium</keyword>
<keyword id="KW-0479">Metal-binding</keyword>
<keyword id="KW-0547">Nucleotide-binding</keyword>
<accession>Q8PTK1</accession>
<dbReference type="EC" id="6.5.1.1" evidence="1"/>
<dbReference type="EMBL" id="AE008384">
    <property type="protein sequence ID" value="AAM32410.1"/>
    <property type="molecule type" value="Genomic_DNA"/>
</dbReference>
<dbReference type="RefSeq" id="WP_011034623.1">
    <property type="nucleotide sequence ID" value="NC_003901.1"/>
</dbReference>
<dbReference type="SMR" id="Q8PTK1"/>
<dbReference type="KEGG" id="mma:MM_2714"/>
<dbReference type="PATRIC" id="fig|192952.21.peg.3124"/>
<dbReference type="eggNOG" id="arCOG01347">
    <property type="taxonomic scope" value="Archaea"/>
</dbReference>
<dbReference type="HOGENOM" id="CLU_005138_6_0_2"/>
<dbReference type="Proteomes" id="UP000000595">
    <property type="component" value="Chromosome"/>
</dbReference>
<dbReference type="GO" id="GO:0005524">
    <property type="term" value="F:ATP binding"/>
    <property type="evidence" value="ECO:0007669"/>
    <property type="project" value="UniProtKB-UniRule"/>
</dbReference>
<dbReference type="GO" id="GO:0003677">
    <property type="term" value="F:DNA binding"/>
    <property type="evidence" value="ECO:0007669"/>
    <property type="project" value="InterPro"/>
</dbReference>
<dbReference type="GO" id="GO:0003910">
    <property type="term" value="F:DNA ligase (ATP) activity"/>
    <property type="evidence" value="ECO:0007669"/>
    <property type="project" value="UniProtKB-UniRule"/>
</dbReference>
<dbReference type="GO" id="GO:0046872">
    <property type="term" value="F:metal ion binding"/>
    <property type="evidence" value="ECO:0007669"/>
    <property type="project" value="UniProtKB-KW"/>
</dbReference>
<dbReference type="GO" id="GO:0051301">
    <property type="term" value="P:cell division"/>
    <property type="evidence" value="ECO:0007669"/>
    <property type="project" value="UniProtKB-KW"/>
</dbReference>
<dbReference type="GO" id="GO:0071897">
    <property type="term" value="P:DNA biosynthetic process"/>
    <property type="evidence" value="ECO:0007669"/>
    <property type="project" value="InterPro"/>
</dbReference>
<dbReference type="GO" id="GO:0006310">
    <property type="term" value="P:DNA recombination"/>
    <property type="evidence" value="ECO:0007669"/>
    <property type="project" value="UniProtKB-UniRule"/>
</dbReference>
<dbReference type="GO" id="GO:0006281">
    <property type="term" value="P:DNA repair"/>
    <property type="evidence" value="ECO:0007669"/>
    <property type="project" value="UniProtKB-UniRule"/>
</dbReference>
<dbReference type="GO" id="GO:0006273">
    <property type="term" value="P:lagging strand elongation"/>
    <property type="evidence" value="ECO:0007669"/>
    <property type="project" value="TreeGrafter"/>
</dbReference>
<dbReference type="CDD" id="cd07901">
    <property type="entry name" value="Adenylation_DNA_ligase_Arch_LigB"/>
    <property type="match status" value="1"/>
</dbReference>
<dbReference type="CDD" id="cd07972">
    <property type="entry name" value="OBF_DNA_ligase_Arch_LigB"/>
    <property type="match status" value="1"/>
</dbReference>
<dbReference type="FunFam" id="1.10.3260.10:FF:000007">
    <property type="entry name" value="DNA ligase"/>
    <property type="match status" value="1"/>
</dbReference>
<dbReference type="FunFam" id="2.40.50.140:FF:000163">
    <property type="entry name" value="Probable DNA ligase"/>
    <property type="match status" value="1"/>
</dbReference>
<dbReference type="FunFam" id="3.30.470.30:FF:000012">
    <property type="entry name" value="Probable DNA ligase"/>
    <property type="match status" value="1"/>
</dbReference>
<dbReference type="Gene3D" id="1.10.3260.10">
    <property type="entry name" value="DNA ligase, ATP-dependent, N-terminal domain"/>
    <property type="match status" value="1"/>
</dbReference>
<dbReference type="Gene3D" id="3.30.470.30">
    <property type="entry name" value="DNA ligase/mRNA capping enzyme"/>
    <property type="match status" value="1"/>
</dbReference>
<dbReference type="Gene3D" id="2.40.50.140">
    <property type="entry name" value="Nucleic acid-binding proteins"/>
    <property type="match status" value="1"/>
</dbReference>
<dbReference type="HAMAP" id="MF_00407">
    <property type="entry name" value="DNA_ligase"/>
    <property type="match status" value="1"/>
</dbReference>
<dbReference type="InterPro" id="IPR050191">
    <property type="entry name" value="ATP-dep_DNA_ligase"/>
</dbReference>
<dbReference type="InterPro" id="IPR022865">
    <property type="entry name" value="DNA_ligae_ATP-dep_bac/arc"/>
</dbReference>
<dbReference type="InterPro" id="IPR000977">
    <property type="entry name" value="DNA_ligase_ATP-dep"/>
</dbReference>
<dbReference type="InterPro" id="IPR012309">
    <property type="entry name" value="DNA_ligase_ATP-dep_C"/>
</dbReference>
<dbReference type="InterPro" id="IPR012310">
    <property type="entry name" value="DNA_ligase_ATP-dep_cent"/>
</dbReference>
<dbReference type="InterPro" id="IPR016059">
    <property type="entry name" value="DNA_ligase_ATP-dep_CS"/>
</dbReference>
<dbReference type="InterPro" id="IPR012308">
    <property type="entry name" value="DNA_ligase_ATP-dep_N"/>
</dbReference>
<dbReference type="InterPro" id="IPR036599">
    <property type="entry name" value="DNA_ligase_N_sf"/>
</dbReference>
<dbReference type="InterPro" id="IPR012340">
    <property type="entry name" value="NA-bd_OB-fold"/>
</dbReference>
<dbReference type="NCBIfam" id="TIGR00574">
    <property type="entry name" value="dnl1"/>
    <property type="match status" value="1"/>
</dbReference>
<dbReference type="PANTHER" id="PTHR45674:SF7">
    <property type="entry name" value="DNA LIGASE"/>
    <property type="match status" value="1"/>
</dbReference>
<dbReference type="PANTHER" id="PTHR45674">
    <property type="entry name" value="DNA LIGASE 1/3 FAMILY MEMBER"/>
    <property type="match status" value="1"/>
</dbReference>
<dbReference type="Pfam" id="PF04679">
    <property type="entry name" value="DNA_ligase_A_C"/>
    <property type="match status" value="1"/>
</dbReference>
<dbReference type="Pfam" id="PF01068">
    <property type="entry name" value="DNA_ligase_A_M"/>
    <property type="match status" value="1"/>
</dbReference>
<dbReference type="Pfam" id="PF04675">
    <property type="entry name" value="DNA_ligase_A_N"/>
    <property type="match status" value="1"/>
</dbReference>
<dbReference type="SUPFAM" id="SSF117018">
    <property type="entry name" value="ATP-dependent DNA ligase DNA-binding domain"/>
    <property type="match status" value="1"/>
</dbReference>
<dbReference type="SUPFAM" id="SSF56091">
    <property type="entry name" value="DNA ligase/mRNA capping enzyme, catalytic domain"/>
    <property type="match status" value="1"/>
</dbReference>
<dbReference type="SUPFAM" id="SSF50249">
    <property type="entry name" value="Nucleic acid-binding proteins"/>
    <property type="match status" value="1"/>
</dbReference>
<dbReference type="PROSITE" id="PS00697">
    <property type="entry name" value="DNA_LIGASE_A1"/>
    <property type="match status" value="1"/>
</dbReference>
<dbReference type="PROSITE" id="PS50160">
    <property type="entry name" value="DNA_LIGASE_A3"/>
    <property type="match status" value="1"/>
</dbReference>
<organism>
    <name type="scientific">Methanosarcina mazei (strain ATCC BAA-159 / DSM 3647 / Goe1 / Go1 / JCM 11833 / OCM 88)</name>
    <name type="common">Methanosarcina frisia</name>
    <dbReference type="NCBI Taxonomy" id="192952"/>
    <lineage>
        <taxon>Archaea</taxon>
        <taxon>Methanobacteriati</taxon>
        <taxon>Methanobacteriota</taxon>
        <taxon>Stenosarchaea group</taxon>
        <taxon>Methanomicrobia</taxon>
        <taxon>Methanosarcinales</taxon>
        <taxon>Methanosarcinaceae</taxon>
        <taxon>Methanosarcina</taxon>
    </lineage>
</organism>
<reference key="1">
    <citation type="journal article" date="2002" name="J. Mol. Microbiol. Biotechnol.">
        <title>The genome of Methanosarcina mazei: evidence for lateral gene transfer between Bacteria and Archaea.</title>
        <authorList>
            <person name="Deppenmeier U."/>
            <person name="Johann A."/>
            <person name="Hartsch T."/>
            <person name="Merkl R."/>
            <person name="Schmitz R.A."/>
            <person name="Martinez-Arias R."/>
            <person name="Henne A."/>
            <person name="Wiezer A."/>
            <person name="Baeumer S."/>
            <person name="Jacobi C."/>
            <person name="Brueggemann H."/>
            <person name="Lienard T."/>
            <person name="Christmann A."/>
            <person name="Boemecke M."/>
            <person name="Steckel S."/>
            <person name="Bhattacharyya A."/>
            <person name="Lykidis A."/>
            <person name="Overbeek R."/>
            <person name="Klenk H.-P."/>
            <person name="Gunsalus R.P."/>
            <person name="Fritz H.-J."/>
            <person name="Gottschalk G."/>
        </authorList>
    </citation>
    <scope>NUCLEOTIDE SEQUENCE [LARGE SCALE GENOMIC DNA]</scope>
    <source>
        <strain>ATCC BAA-159 / DSM 3647 / Goe1 / Go1 / JCM 11833 / OCM 88</strain>
    </source>
</reference>
<gene>
    <name evidence="1" type="primary">lig2</name>
    <name type="ordered locus">MM_2714</name>
</gene>
<proteinExistence type="inferred from homology"/>
<feature type="chain" id="PRO_0000059606" description="DNA ligase 2">
    <location>
        <begin position="1"/>
        <end position="568"/>
    </location>
</feature>
<feature type="active site" description="N6-AMP-lysine intermediate" evidence="1">
    <location>
        <position position="256"/>
    </location>
</feature>
<feature type="binding site" evidence="1">
    <location>
        <position position="254"/>
    </location>
    <ligand>
        <name>ATP</name>
        <dbReference type="ChEBI" id="CHEBI:30616"/>
    </ligand>
</feature>
<feature type="binding site" evidence="1">
    <location>
        <position position="261"/>
    </location>
    <ligand>
        <name>ATP</name>
        <dbReference type="ChEBI" id="CHEBI:30616"/>
    </ligand>
</feature>
<feature type="binding site" evidence="1">
    <location>
        <position position="276"/>
    </location>
    <ligand>
        <name>ATP</name>
        <dbReference type="ChEBI" id="CHEBI:30616"/>
    </ligand>
</feature>
<feature type="binding site" evidence="1">
    <location>
        <position position="306"/>
    </location>
    <ligand>
        <name>ATP</name>
        <dbReference type="ChEBI" id="CHEBI:30616"/>
    </ligand>
</feature>
<feature type="binding site" evidence="1">
    <location>
        <position position="346"/>
    </location>
    <ligand>
        <name>ATP</name>
        <dbReference type="ChEBI" id="CHEBI:30616"/>
    </ligand>
</feature>
<feature type="binding site" evidence="1">
    <location>
        <position position="425"/>
    </location>
    <ligand>
        <name>ATP</name>
        <dbReference type="ChEBI" id="CHEBI:30616"/>
    </ligand>
</feature>
<feature type="binding site" evidence="1">
    <location>
        <position position="431"/>
    </location>
    <ligand>
        <name>ATP</name>
        <dbReference type="ChEBI" id="CHEBI:30616"/>
    </ligand>
</feature>
<protein>
    <recommendedName>
        <fullName evidence="1">DNA ligase 2</fullName>
        <ecNumber evidence="1">6.5.1.1</ecNumber>
    </recommendedName>
    <alternativeName>
        <fullName evidence="1">Polydeoxyribonucleotide synthase [ATP] 2</fullName>
    </alternativeName>
</protein>
<name>DNLI2_METMA</name>
<evidence type="ECO:0000255" key="1">
    <source>
        <dbReference type="HAMAP-Rule" id="MF_00407"/>
    </source>
</evidence>
<sequence length="568" mass="63185">MTSFREFAETCQAIEKISSTIETTNKVADLLKKVDVEELPVATHFIMSEVFPAWSGEQLGIGTSLLYVSLSKASGMSIHSIESLVRTTGDIGDTALLILKEKRKNQVTFSSFFEEKPELSITEVYRRFKIASEASGKGSQDIKVKNLQFLFTSSSPREAKYISRLALEELRIGVGEGVVRDAIAKAFSVPAEIVEHSFMVTNDLGIVAAAAKKGGVEALERLGIEINRPIKMMLSQISPDIDADIRAMKEVAIEWKFDGARVQIHKDGNSVTLFSRKLENVTSSLPDLVEIVRKHVKAESAILDGEAVAVDENGVPRAFQEILKRFRRKYDVREKALGIPIQLNFFDIMYINGKTLIDLPLLERRKALESCVESSVEDSKSISVAEQVITGDLELVEKIYREALKAGHEGVMVKNPNSVYSPGKRGKNWLKKKPLMDTLDLVIVGAEWGFGRRANLIGSYTVACYDPDTTRFLQVGKVGTGLTDDQLKELTEILSGLMEGGEAGGVFAIRPKVVLEIAFEEIQKSPNYDSGFALRFPRFIRIRDDKDPEEADTIQRIGRVYSQQLKRL</sequence>